<accession>Q7N748</accession>
<protein>
    <recommendedName>
        <fullName evidence="1">Endoribonuclease YbeY</fullName>
        <ecNumber evidence="1">3.1.-.-</ecNumber>
    </recommendedName>
</protein>
<evidence type="ECO:0000255" key="1">
    <source>
        <dbReference type="HAMAP-Rule" id="MF_00009"/>
    </source>
</evidence>
<feature type="chain" id="PRO_0000102503" description="Endoribonuclease YbeY">
    <location>
        <begin position="1"/>
        <end position="155"/>
    </location>
</feature>
<feature type="binding site" evidence="1">
    <location>
        <position position="114"/>
    </location>
    <ligand>
        <name>Zn(2+)</name>
        <dbReference type="ChEBI" id="CHEBI:29105"/>
        <note>catalytic</note>
    </ligand>
</feature>
<feature type="binding site" evidence="1">
    <location>
        <position position="118"/>
    </location>
    <ligand>
        <name>Zn(2+)</name>
        <dbReference type="ChEBI" id="CHEBI:29105"/>
        <note>catalytic</note>
    </ligand>
</feature>
<feature type="binding site" evidence="1">
    <location>
        <position position="124"/>
    </location>
    <ligand>
        <name>Zn(2+)</name>
        <dbReference type="ChEBI" id="CHEBI:29105"/>
        <note>catalytic</note>
    </ligand>
</feature>
<name>YBEY_PHOLL</name>
<gene>
    <name evidence="1" type="primary">ybeY</name>
    <name type="ordered locus">plu1310</name>
</gene>
<organism>
    <name type="scientific">Photorhabdus laumondii subsp. laumondii (strain DSM 15139 / CIP 105565 / TT01)</name>
    <name type="common">Photorhabdus luminescens subsp. laumondii</name>
    <dbReference type="NCBI Taxonomy" id="243265"/>
    <lineage>
        <taxon>Bacteria</taxon>
        <taxon>Pseudomonadati</taxon>
        <taxon>Pseudomonadota</taxon>
        <taxon>Gammaproteobacteria</taxon>
        <taxon>Enterobacterales</taxon>
        <taxon>Morganellaceae</taxon>
        <taxon>Photorhabdus</taxon>
    </lineage>
</organism>
<proteinExistence type="inferred from homology"/>
<keyword id="KW-0963">Cytoplasm</keyword>
<keyword id="KW-0255">Endonuclease</keyword>
<keyword id="KW-0378">Hydrolase</keyword>
<keyword id="KW-0479">Metal-binding</keyword>
<keyword id="KW-0540">Nuclease</keyword>
<keyword id="KW-1185">Reference proteome</keyword>
<keyword id="KW-0690">Ribosome biogenesis</keyword>
<keyword id="KW-0698">rRNA processing</keyword>
<keyword id="KW-0862">Zinc</keyword>
<dbReference type="EC" id="3.1.-.-" evidence="1"/>
<dbReference type="EMBL" id="BX571863">
    <property type="protein sequence ID" value="CAE13604.1"/>
    <property type="molecule type" value="Genomic_DNA"/>
</dbReference>
<dbReference type="RefSeq" id="WP_011145634.1">
    <property type="nucleotide sequence ID" value="NC_005126.1"/>
</dbReference>
<dbReference type="SMR" id="Q7N748"/>
<dbReference type="STRING" id="243265.plu1310"/>
<dbReference type="GeneID" id="48847588"/>
<dbReference type="KEGG" id="plu:plu1310"/>
<dbReference type="eggNOG" id="COG0319">
    <property type="taxonomic scope" value="Bacteria"/>
</dbReference>
<dbReference type="HOGENOM" id="CLU_106710_0_1_6"/>
<dbReference type="OrthoDB" id="9807740at2"/>
<dbReference type="Proteomes" id="UP000002514">
    <property type="component" value="Chromosome"/>
</dbReference>
<dbReference type="GO" id="GO:0005737">
    <property type="term" value="C:cytoplasm"/>
    <property type="evidence" value="ECO:0007669"/>
    <property type="project" value="UniProtKB-SubCell"/>
</dbReference>
<dbReference type="GO" id="GO:0004222">
    <property type="term" value="F:metalloendopeptidase activity"/>
    <property type="evidence" value="ECO:0007669"/>
    <property type="project" value="InterPro"/>
</dbReference>
<dbReference type="GO" id="GO:0004521">
    <property type="term" value="F:RNA endonuclease activity"/>
    <property type="evidence" value="ECO:0007669"/>
    <property type="project" value="UniProtKB-UniRule"/>
</dbReference>
<dbReference type="GO" id="GO:0008270">
    <property type="term" value="F:zinc ion binding"/>
    <property type="evidence" value="ECO:0007669"/>
    <property type="project" value="UniProtKB-UniRule"/>
</dbReference>
<dbReference type="GO" id="GO:0006364">
    <property type="term" value="P:rRNA processing"/>
    <property type="evidence" value="ECO:0007669"/>
    <property type="project" value="UniProtKB-UniRule"/>
</dbReference>
<dbReference type="Gene3D" id="3.40.390.30">
    <property type="entry name" value="Metalloproteases ('zincins'), catalytic domain"/>
    <property type="match status" value="1"/>
</dbReference>
<dbReference type="HAMAP" id="MF_00009">
    <property type="entry name" value="Endoribonucl_YbeY"/>
    <property type="match status" value="1"/>
</dbReference>
<dbReference type="InterPro" id="IPR023091">
    <property type="entry name" value="MetalPrtase_cat_dom_sf_prd"/>
</dbReference>
<dbReference type="InterPro" id="IPR002036">
    <property type="entry name" value="YbeY"/>
</dbReference>
<dbReference type="InterPro" id="IPR020549">
    <property type="entry name" value="YbeY_CS"/>
</dbReference>
<dbReference type="NCBIfam" id="TIGR00043">
    <property type="entry name" value="rRNA maturation RNase YbeY"/>
    <property type="match status" value="1"/>
</dbReference>
<dbReference type="PANTHER" id="PTHR46986">
    <property type="entry name" value="ENDORIBONUCLEASE YBEY, CHLOROPLASTIC"/>
    <property type="match status" value="1"/>
</dbReference>
<dbReference type="PANTHER" id="PTHR46986:SF1">
    <property type="entry name" value="ENDORIBONUCLEASE YBEY, CHLOROPLASTIC"/>
    <property type="match status" value="1"/>
</dbReference>
<dbReference type="Pfam" id="PF02130">
    <property type="entry name" value="YbeY"/>
    <property type="match status" value="1"/>
</dbReference>
<dbReference type="SUPFAM" id="SSF55486">
    <property type="entry name" value="Metalloproteases ('zincins'), catalytic domain"/>
    <property type="match status" value="1"/>
</dbReference>
<dbReference type="PROSITE" id="PS01306">
    <property type="entry name" value="UPF0054"/>
    <property type="match status" value="1"/>
</dbReference>
<reference key="1">
    <citation type="journal article" date="2003" name="Nat. Biotechnol.">
        <title>The genome sequence of the entomopathogenic bacterium Photorhabdus luminescens.</title>
        <authorList>
            <person name="Duchaud E."/>
            <person name="Rusniok C."/>
            <person name="Frangeul L."/>
            <person name="Buchrieser C."/>
            <person name="Givaudan A."/>
            <person name="Taourit S."/>
            <person name="Bocs S."/>
            <person name="Boursaux-Eude C."/>
            <person name="Chandler M."/>
            <person name="Charles J.-F."/>
            <person name="Dassa E."/>
            <person name="Derose R."/>
            <person name="Derzelle S."/>
            <person name="Freyssinet G."/>
            <person name="Gaudriault S."/>
            <person name="Medigue C."/>
            <person name="Lanois A."/>
            <person name="Powell K."/>
            <person name="Siguier P."/>
            <person name="Vincent R."/>
            <person name="Wingate V."/>
            <person name="Zouine M."/>
            <person name="Glaser P."/>
            <person name="Boemare N."/>
            <person name="Danchin A."/>
            <person name="Kunst F."/>
        </authorList>
    </citation>
    <scope>NUCLEOTIDE SEQUENCE [LARGE SCALE GENOMIC DNA]</scope>
    <source>
        <strain>DSM 15139 / CIP 105565 / TT01</strain>
    </source>
</reference>
<sequence length="155" mass="17767">MSSVILDLQIACEHSQGLPKETLFQHWLDGVLPQFQSESEVTIRIVDEAESHDLNLTYRGKNKPTNVLSFPFEAPPEIDLPLLGDLIICRQVVEKEAEEQQKTIEEHWAHMVVHGCLHLLGYDHIEDDEAEEMESLETEIMQKLGYADPYLAEKE</sequence>
<comment type="function">
    <text evidence="1">Single strand-specific metallo-endoribonuclease involved in late-stage 70S ribosome quality control and in maturation of the 3' terminus of the 16S rRNA.</text>
</comment>
<comment type="cofactor">
    <cofactor evidence="1">
        <name>Zn(2+)</name>
        <dbReference type="ChEBI" id="CHEBI:29105"/>
    </cofactor>
    <text evidence="1">Binds 1 zinc ion.</text>
</comment>
<comment type="subcellular location">
    <subcellularLocation>
        <location evidence="1">Cytoplasm</location>
    </subcellularLocation>
</comment>
<comment type="similarity">
    <text evidence="1">Belongs to the endoribonuclease YbeY family.</text>
</comment>